<sequence length="338" mass="36045">MFEMKNSTRYILSLLLSIIMGVAVMGSTFAISTTYGTGHTTATVDNLKPVVNCSSYEMVIRTVQGIKVYEYKNTTGVTPGLLRSDALEAYAYTGEGVTFYVNVSDPNGEQDLQTNGAGVDFLLVPQGQSPSNPTYVIHAGFDTSTSGDADLTTLTFYAQWTVPAGAYGCFDVYVKATDKHGACTGYIKKGKIFLNPMIGINVTKDNDAYPAPFTGLSFGNVNPGDTNVPATENVVTIHNIDPDGVGTKIAVFVSATSMTQAGGTGIIPAENIKAHVIKANNMTQSYNTHLQNNVKVLLWQPLKPCHTNALEVNFTLDVPTPLPSGCYGGSITFYGLGL</sequence>
<gene>
    <name type="ordered locus">MJ0289</name>
</gene>
<name>Y289_METJA</name>
<organism>
    <name type="scientific">Methanocaldococcus jannaschii (strain ATCC 43067 / DSM 2661 / JAL-1 / JCM 10045 / NBRC 100440)</name>
    <name type="common">Methanococcus jannaschii</name>
    <dbReference type="NCBI Taxonomy" id="243232"/>
    <lineage>
        <taxon>Archaea</taxon>
        <taxon>Methanobacteriati</taxon>
        <taxon>Methanobacteriota</taxon>
        <taxon>Methanomada group</taxon>
        <taxon>Methanococci</taxon>
        <taxon>Methanococcales</taxon>
        <taxon>Methanocaldococcaceae</taxon>
        <taxon>Methanocaldococcus</taxon>
    </lineage>
</organism>
<proteinExistence type="predicted"/>
<accession>Q57737</accession>
<dbReference type="EMBL" id="L77117">
    <property type="protein sequence ID" value="AAB98282.1"/>
    <property type="molecule type" value="Genomic_DNA"/>
</dbReference>
<dbReference type="PIR" id="B64336">
    <property type="entry name" value="B64336"/>
</dbReference>
<dbReference type="STRING" id="243232.MJ_0289"/>
<dbReference type="PaxDb" id="243232-MJ_0289"/>
<dbReference type="EnsemblBacteria" id="AAB98282">
    <property type="protein sequence ID" value="AAB98282"/>
    <property type="gene ID" value="MJ_0289"/>
</dbReference>
<dbReference type="KEGG" id="mja:MJ_0289"/>
<dbReference type="eggNOG" id="arCOG09663">
    <property type="taxonomic scope" value="Archaea"/>
</dbReference>
<dbReference type="HOGENOM" id="CLU_840947_0_0_2"/>
<dbReference type="InParanoid" id="Q57737"/>
<dbReference type="Proteomes" id="UP000000805">
    <property type="component" value="Chromosome"/>
</dbReference>
<dbReference type="GO" id="GO:0005886">
    <property type="term" value="C:plasma membrane"/>
    <property type="evidence" value="ECO:0007669"/>
    <property type="project" value="UniProtKB-SubCell"/>
</dbReference>
<evidence type="ECO:0000255" key="1"/>
<evidence type="ECO:0000305" key="2"/>
<feature type="chain" id="PRO_0000106776" description="Uncharacterized protein MJ0289">
    <location>
        <begin position="1"/>
        <end position="338"/>
    </location>
</feature>
<feature type="transmembrane region" description="Helical" evidence="1">
    <location>
        <begin position="11"/>
        <end position="31"/>
    </location>
</feature>
<feature type="transmembrane region" description="Helical" evidence="1">
    <location>
        <begin position="249"/>
        <end position="269"/>
    </location>
</feature>
<feature type="transmembrane region" description="Helical" evidence="1">
    <location>
        <begin position="318"/>
        <end position="338"/>
    </location>
</feature>
<reference key="1">
    <citation type="journal article" date="1996" name="Science">
        <title>Complete genome sequence of the methanogenic archaeon, Methanococcus jannaschii.</title>
        <authorList>
            <person name="Bult C.J."/>
            <person name="White O."/>
            <person name="Olsen G.J."/>
            <person name="Zhou L."/>
            <person name="Fleischmann R.D."/>
            <person name="Sutton G.G."/>
            <person name="Blake J.A."/>
            <person name="FitzGerald L.M."/>
            <person name="Clayton R.A."/>
            <person name="Gocayne J.D."/>
            <person name="Kerlavage A.R."/>
            <person name="Dougherty B.A."/>
            <person name="Tomb J.-F."/>
            <person name="Adams M.D."/>
            <person name="Reich C.I."/>
            <person name="Overbeek R."/>
            <person name="Kirkness E.F."/>
            <person name="Weinstock K.G."/>
            <person name="Merrick J.M."/>
            <person name="Glodek A."/>
            <person name="Scott J.L."/>
            <person name="Geoghagen N.S.M."/>
            <person name="Weidman J.F."/>
            <person name="Fuhrmann J.L."/>
            <person name="Nguyen D."/>
            <person name="Utterback T.R."/>
            <person name="Kelley J.M."/>
            <person name="Peterson J.D."/>
            <person name="Sadow P.W."/>
            <person name="Hanna M.C."/>
            <person name="Cotton M.D."/>
            <person name="Roberts K.M."/>
            <person name="Hurst M.A."/>
            <person name="Kaine B.P."/>
            <person name="Borodovsky M."/>
            <person name="Klenk H.-P."/>
            <person name="Fraser C.M."/>
            <person name="Smith H.O."/>
            <person name="Woese C.R."/>
            <person name="Venter J.C."/>
        </authorList>
    </citation>
    <scope>NUCLEOTIDE SEQUENCE [LARGE SCALE GENOMIC DNA]</scope>
    <source>
        <strain>ATCC 43067 / DSM 2661 / JAL-1 / JCM 10045 / NBRC 100440</strain>
    </source>
</reference>
<protein>
    <recommendedName>
        <fullName>Uncharacterized protein MJ0289</fullName>
    </recommendedName>
</protein>
<comment type="subcellular location">
    <subcellularLocation>
        <location evidence="2">Cell membrane</location>
        <topology evidence="2">Multi-pass membrane protein</topology>
    </subcellularLocation>
</comment>
<keyword id="KW-1003">Cell membrane</keyword>
<keyword id="KW-0472">Membrane</keyword>
<keyword id="KW-1185">Reference proteome</keyword>
<keyword id="KW-0812">Transmembrane</keyword>
<keyword id="KW-1133">Transmembrane helix</keyword>